<reference key="1">
    <citation type="journal article" date="2004" name="Genome Res.">
        <title>The complete genome and proteome of Mycoplasma mobile.</title>
        <authorList>
            <person name="Jaffe J.D."/>
            <person name="Stange-Thomann N."/>
            <person name="Smith C."/>
            <person name="DeCaprio D."/>
            <person name="Fisher S."/>
            <person name="Butler J."/>
            <person name="Calvo S."/>
            <person name="Elkins T."/>
            <person name="FitzGerald M.G."/>
            <person name="Hafez N."/>
            <person name="Kodira C.D."/>
            <person name="Major J."/>
            <person name="Wang S."/>
            <person name="Wilkinson J."/>
            <person name="Nicol R."/>
            <person name="Nusbaum C."/>
            <person name="Birren B."/>
            <person name="Berg H.C."/>
            <person name="Church G.M."/>
        </authorList>
    </citation>
    <scope>NUCLEOTIDE SEQUENCE [LARGE SCALE GENOMIC DNA]</scope>
    <source>
        <strain>ATCC 43663 / NCTC 11711 / 163 K</strain>
    </source>
</reference>
<dbReference type="EC" id="2.7.8.7" evidence="1"/>
<dbReference type="EMBL" id="AE017308">
    <property type="protein sequence ID" value="AAT27965.1"/>
    <property type="molecule type" value="Genomic_DNA"/>
</dbReference>
<dbReference type="SMR" id="Q6KHG5"/>
<dbReference type="STRING" id="267748.MMOB4790"/>
<dbReference type="KEGG" id="mmo:MMOB4790"/>
<dbReference type="eggNOG" id="COG0736">
    <property type="taxonomic scope" value="Bacteria"/>
</dbReference>
<dbReference type="HOGENOM" id="CLU_089696_1_1_14"/>
<dbReference type="Proteomes" id="UP000009072">
    <property type="component" value="Chromosome"/>
</dbReference>
<dbReference type="GO" id="GO:0005737">
    <property type="term" value="C:cytoplasm"/>
    <property type="evidence" value="ECO:0007669"/>
    <property type="project" value="UniProtKB-SubCell"/>
</dbReference>
<dbReference type="GO" id="GO:0008897">
    <property type="term" value="F:holo-[acyl-carrier-protein] synthase activity"/>
    <property type="evidence" value="ECO:0007669"/>
    <property type="project" value="UniProtKB-UniRule"/>
</dbReference>
<dbReference type="GO" id="GO:0000287">
    <property type="term" value="F:magnesium ion binding"/>
    <property type="evidence" value="ECO:0007669"/>
    <property type="project" value="UniProtKB-UniRule"/>
</dbReference>
<dbReference type="GO" id="GO:0006633">
    <property type="term" value="P:fatty acid biosynthetic process"/>
    <property type="evidence" value="ECO:0007669"/>
    <property type="project" value="UniProtKB-UniRule"/>
</dbReference>
<dbReference type="Gene3D" id="3.90.470.20">
    <property type="entry name" value="4'-phosphopantetheinyl transferase domain"/>
    <property type="match status" value="1"/>
</dbReference>
<dbReference type="HAMAP" id="MF_00101">
    <property type="entry name" value="AcpS"/>
    <property type="match status" value="1"/>
</dbReference>
<dbReference type="InterPro" id="IPR008278">
    <property type="entry name" value="4-PPantetheinyl_Trfase_dom"/>
</dbReference>
<dbReference type="InterPro" id="IPR037143">
    <property type="entry name" value="4-PPantetheinyl_Trfase_dom_sf"/>
</dbReference>
<dbReference type="InterPro" id="IPR002582">
    <property type="entry name" value="ACPS"/>
</dbReference>
<dbReference type="InterPro" id="IPR004568">
    <property type="entry name" value="Ppantetheine-prot_Trfase_dom"/>
</dbReference>
<dbReference type="NCBIfam" id="TIGR00556">
    <property type="entry name" value="pantethn_trn"/>
    <property type="match status" value="1"/>
</dbReference>
<dbReference type="Pfam" id="PF01648">
    <property type="entry name" value="ACPS"/>
    <property type="match status" value="1"/>
</dbReference>
<dbReference type="SUPFAM" id="SSF56214">
    <property type="entry name" value="4'-phosphopantetheinyl transferase"/>
    <property type="match status" value="1"/>
</dbReference>
<feature type="chain" id="PRO_0000175670" description="Holo-[acyl-carrier-protein] synthase">
    <location>
        <begin position="1"/>
        <end position="107"/>
    </location>
</feature>
<feature type="binding site" evidence="1">
    <location>
        <position position="10"/>
    </location>
    <ligand>
        <name>Mg(2+)</name>
        <dbReference type="ChEBI" id="CHEBI:18420"/>
    </ligand>
</feature>
<feature type="binding site" evidence="1">
    <location>
        <position position="54"/>
    </location>
    <ligand>
        <name>Mg(2+)</name>
        <dbReference type="ChEBI" id="CHEBI:18420"/>
    </ligand>
</feature>
<name>ACPS_MYCM1</name>
<accession>Q6KHG5</accession>
<protein>
    <recommendedName>
        <fullName evidence="1">Holo-[acyl-carrier-protein] synthase</fullName>
        <shortName evidence="1">Holo-ACP synthase</shortName>
        <ecNumber evidence="1">2.7.8.7</ecNumber>
    </recommendedName>
    <alternativeName>
        <fullName evidence="1">4'-phosphopantetheinyl transferase AcpS</fullName>
    </alternativeName>
</protein>
<gene>
    <name evidence="1" type="primary">acpS</name>
    <name type="ordered locus">MMOB4790</name>
</gene>
<keyword id="KW-0963">Cytoplasm</keyword>
<keyword id="KW-0275">Fatty acid biosynthesis</keyword>
<keyword id="KW-0276">Fatty acid metabolism</keyword>
<keyword id="KW-0444">Lipid biosynthesis</keyword>
<keyword id="KW-0443">Lipid metabolism</keyword>
<keyword id="KW-0460">Magnesium</keyword>
<keyword id="KW-0479">Metal-binding</keyword>
<keyword id="KW-1185">Reference proteome</keyword>
<keyword id="KW-0808">Transferase</keyword>
<proteinExistence type="inferred from homology"/>
<comment type="function">
    <text evidence="1">Transfers the 4'-phosphopantetheine moiety from coenzyme A to a Ser of acyl-carrier-protein.</text>
</comment>
<comment type="catalytic activity">
    <reaction evidence="1">
        <text>apo-[ACP] + CoA = holo-[ACP] + adenosine 3',5'-bisphosphate + H(+)</text>
        <dbReference type="Rhea" id="RHEA:12068"/>
        <dbReference type="Rhea" id="RHEA-COMP:9685"/>
        <dbReference type="Rhea" id="RHEA-COMP:9690"/>
        <dbReference type="ChEBI" id="CHEBI:15378"/>
        <dbReference type="ChEBI" id="CHEBI:29999"/>
        <dbReference type="ChEBI" id="CHEBI:57287"/>
        <dbReference type="ChEBI" id="CHEBI:58343"/>
        <dbReference type="ChEBI" id="CHEBI:64479"/>
        <dbReference type="EC" id="2.7.8.7"/>
    </reaction>
</comment>
<comment type="cofactor">
    <cofactor evidence="1">
        <name>Mg(2+)</name>
        <dbReference type="ChEBI" id="CHEBI:18420"/>
    </cofactor>
</comment>
<comment type="subcellular location">
    <subcellularLocation>
        <location evidence="1">Cytoplasm</location>
    </subcellularLocation>
</comment>
<comment type="similarity">
    <text evidence="1">Belongs to the P-Pant transferase superfamily. AcpS family.</text>
</comment>
<organism>
    <name type="scientific">Mycoplasma mobile (strain ATCC 43663 / 163K / NCTC 11711)</name>
    <name type="common">Mesomycoplasma mobile</name>
    <dbReference type="NCBI Taxonomy" id="267748"/>
    <lineage>
        <taxon>Bacteria</taxon>
        <taxon>Bacillati</taxon>
        <taxon>Mycoplasmatota</taxon>
        <taxon>Mycoplasmoidales</taxon>
        <taxon>Metamycoplasmataceae</taxon>
        <taxon>Mesomycoplasma</taxon>
    </lineage>
</organism>
<sequence>MYNLKMIGVDLTKISRFKNKSEKFAKRILSHEEFEKWEINKDHSFLATRWAIKEAIYKADNNFFEFSKINVKKDNYYWFQNFYISVSHEGDLIIAFVIKKEKNESQN</sequence>
<evidence type="ECO:0000255" key="1">
    <source>
        <dbReference type="HAMAP-Rule" id="MF_00101"/>
    </source>
</evidence>